<gene>
    <name evidence="1" type="primary">glnS</name>
    <name type="ordered locus">CPF_0626</name>
</gene>
<protein>
    <recommendedName>
        <fullName evidence="1">Glutamine--tRNA ligase</fullName>
        <ecNumber evidence="1">6.1.1.18</ecNumber>
    </recommendedName>
    <alternativeName>
        <fullName evidence="1">Glutaminyl-tRNA synthetase</fullName>
        <shortName evidence="1">GlnRS</shortName>
    </alternativeName>
</protein>
<organism>
    <name type="scientific">Clostridium perfringens (strain ATCC 13124 / DSM 756 / JCM 1290 / NCIMB 6125 / NCTC 8237 / Type A)</name>
    <dbReference type="NCBI Taxonomy" id="195103"/>
    <lineage>
        <taxon>Bacteria</taxon>
        <taxon>Bacillati</taxon>
        <taxon>Bacillota</taxon>
        <taxon>Clostridia</taxon>
        <taxon>Eubacteriales</taxon>
        <taxon>Clostridiaceae</taxon>
        <taxon>Clostridium</taxon>
    </lineage>
</organism>
<proteinExistence type="inferred from homology"/>
<name>SYQ_CLOP1</name>
<sequence>MSNAEHSSNFIRNIIIDDLDSKKHDTIITRFPPEPNGYLHIGHAKSIVLNFELGKEFNGRTNLRFDDTNPTKEDTEYVESIKEDVHWLGYNWSELHFASNYFDEMYKRALLLIKKGKAYVCDLTPEEIKEYRGTLTEPGKESPYRNRSVEENLDLFERMRKGEFEDGSKVLRAKIDMSSPNINFRDPIIYRIAHASHHNTGDKWCIYPMYDFAHPLEDAIEGITHSICTLEFADHRPLYDWFVKECEMESVPRQIEFARLNITNTVMSKRKLKQLVDEGIVDGWDDPRMPTVAGLRRRGYTPKSIRNFCKAIGVAKADSTVDSQMLEHFIREDLQETAPRAMAVINPLKLVITNYPEGESEILEIENNPKDESAGKRAVTFSREVYIEREDFMENPPKKYFRLFPGNEVRLKGAYFVKCNEVIKDENGEVTEIHCTYDPETKSGTGFTGRKVKGTIHWVDANNCIPAEFRLYEPLILDDCEENEGKHFLEQINPNSLTICKGFIEPSAKDAKPQDKYQLFRHGYFNVDPNFTSDDNLVFNRIVSLKSSFKLK</sequence>
<comment type="catalytic activity">
    <reaction evidence="1">
        <text>tRNA(Gln) + L-glutamine + ATP = L-glutaminyl-tRNA(Gln) + AMP + diphosphate</text>
        <dbReference type="Rhea" id="RHEA:20121"/>
        <dbReference type="Rhea" id="RHEA-COMP:9662"/>
        <dbReference type="Rhea" id="RHEA-COMP:9681"/>
        <dbReference type="ChEBI" id="CHEBI:30616"/>
        <dbReference type="ChEBI" id="CHEBI:33019"/>
        <dbReference type="ChEBI" id="CHEBI:58359"/>
        <dbReference type="ChEBI" id="CHEBI:78442"/>
        <dbReference type="ChEBI" id="CHEBI:78521"/>
        <dbReference type="ChEBI" id="CHEBI:456215"/>
        <dbReference type="EC" id="6.1.1.18"/>
    </reaction>
</comment>
<comment type="subunit">
    <text evidence="1">Monomer.</text>
</comment>
<comment type="subcellular location">
    <subcellularLocation>
        <location evidence="1">Cytoplasm</location>
    </subcellularLocation>
</comment>
<comment type="similarity">
    <text evidence="1">Belongs to the class-I aminoacyl-tRNA synthetase family.</text>
</comment>
<feature type="chain" id="PRO_1000095484" description="Glutamine--tRNA ligase">
    <location>
        <begin position="1"/>
        <end position="552"/>
    </location>
</feature>
<feature type="short sequence motif" description="'HIGH' region" evidence="1">
    <location>
        <begin position="33"/>
        <end position="43"/>
    </location>
</feature>
<feature type="short sequence motif" description="'KMSKS' region" evidence="1">
    <location>
        <begin position="266"/>
        <end position="270"/>
    </location>
</feature>
<feature type="binding site" evidence="1">
    <location>
        <begin position="34"/>
        <end position="36"/>
    </location>
    <ligand>
        <name>ATP</name>
        <dbReference type="ChEBI" id="CHEBI:30616"/>
    </ligand>
</feature>
<feature type="binding site" evidence="1">
    <location>
        <begin position="40"/>
        <end position="46"/>
    </location>
    <ligand>
        <name>ATP</name>
        <dbReference type="ChEBI" id="CHEBI:30616"/>
    </ligand>
</feature>
<feature type="binding site" evidence="1">
    <location>
        <position position="66"/>
    </location>
    <ligand>
        <name>L-glutamine</name>
        <dbReference type="ChEBI" id="CHEBI:58359"/>
    </ligand>
</feature>
<feature type="binding site" evidence="1">
    <location>
        <position position="210"/>
    </location>
    <ligand>
        <name>L-glutamine</name>
        <dbReference type="ChEBI" id="CHEBI:58359"/>
    </ligand>
</feature>
<feature type="binding site" evidence="1">
    <location>
        <position position="229"/>
    </location>
    <ligand>
        <name>ATP</name>
        <dbReference type="ChEBI" id="CHEBI:30616"/>
    </ligand>
</feature>
<feature type="binding site" evidence="1">
    <location>
        <begin position="259"/>
        <end position="260"/>
    </location>
    <ligand>
        <name>ATP</name>
        <dbReference type="ChEBI" id="CHEBI:30616"/>
    </ligand>
</feature>
<feature type="binding site" evidence="1">
    <location>
        <begin position="267"/>
        <end position="269"/>
    </location>
    <ligand>
        <name>ATP</name>
        <dbReference type="ChEBI" id="CHEBI:30616"/>
    </ligand>
</feature>
<reference key="1">
    <citation type="journal article" date="2006" name="Genome Res.">
        <title>Skewed genomic variability in strains of the toxigenic bacterial pathogen, Clostridium perfringens.</title>
        <authorList>
            <person name="Myers G.S.A."/>
            <person name="Rasko D.A."/>
            <person name="Cheung J.K."/>
            <person name="Ravel J."/>
            <person name="Seshadri R."/>
            <person name="DeBoy R.T."/>
            <person name="Ren Q."/>
            <person name="Varga J."/>
            <person name="Awad M.M."/>
            <person name="Brinkac L.M."/>
            <person name="Daugherty S.C."/>
            <person name="Haft D.H."/>
            <person name="Dodson R.J."/>
            <person name="Madupu R."/>
            <person name="Nelson W.C."/>
            <person name="Rosovitz M.J."/>
            <person name="Sullivan S.A."/>
            <person name="Khouri H."/>
            <person name="Dimitrov G.I."/>
            <person name="Watkins K.L."/>
            <person name="Mulligan S."/>
            <person name="Benton J."/>
            <person name="Radune D."/>
            <person name="Fisher D.J."/>
            <person name="Atkins H.S."/>
            <person name="Hiscox T."/>
            <person name="Jost B.H."/>
            <person name="Billington S.J."/>
            <person name="Songer J.G."/>
            <person name="McClane B.A."/>
            <person name="Titball R.W."/>
            <person name="Rood J.I."/>
            <person name="Melville S.B."/>
            <person name="Paulsen I.T."/>
        </authorList>
    </citation>
    <scope>NUCLEOTIDE SEQUENCE [LARGE SCALE GENOMIC DNA]</scope>
    <source>
        <strain>ATCC 13124 / DSM 756 / JCM 1290 / NCIMB 6125 / NCTC 8237 / S 107 / Type A</strain>
    </source>
</reference>
<evidence type="ECO:0000255" key="1">
    <source>
        <dbReference type="HAMAP-Rule" id="MF_00126"/>
    </source>
</evidence>
<accession>Q0TTG1</accession>
<dbReference type="EC" id="6.1.1.18" evidence="1"/>
<dbReference type="EMBL" id="CP000246">
    <property type="protein sequence ID" value="ABG84703.1"/>
    <property type="molecule type" value="Genomic_DNA"/>
</dbReference>
<dbReference type="RefSeq" id="WP_003453104.1">
    <property type="nucleotide sequence ID" value="NC_008261.1"/>
</dbReference>
<dbReference type="SMR" id="Q0TTG1"/>
<dbReference type="STRING" id="195103.CPF_0626"/>
<dbReference type="PaxDb" id="195103-CPF_0626"/>
<dbReference type="KEGG" id="cpf:CPF_0626"/>
<dbReference type="eggNOG" id="COG0008">
    <property type="taxonomic scope" value="Bacteria"/>
</dbReference>
<dbReference type="HOGENOM" id="CLU_001882_2_3_9"/>
<dbReference type="Proteomes" id="UP000001823">
    <property type="component" value="Chromosome"/>
</dbReference>
<dbReference type="GO" id="GO:0005829">
    <property type="term" value="C:cytosol"/>
    <property type="evidence" value="ECO:0007669"/>
    <property type="project" value="TreeGrafter"/>
</dbReference>
<dbReference type="GO" id="GO:0005524">
    <property type="term" value="F:ATP binding"/>
    <property type="evidence" value="ECO:0007669"/>
    <property type="project" value="UniProtKB-UniRule"/>
</dbReference>
<dbReference type="GO" id="GO:0004819">
    <property type="term" value="F:glutamine-tRNA ligase activity"/>
    <property type="evidence" value="ECO:0007669"/>
    <property type="project" value="UniProtKB-UniRule"/>
</dbReference>
<dbReference type="GO" id="GO:0006425">
    <property type="term" value="P:glutaminyl-tRNA aminoacylation"/>
    <property type="evidence" value="ECO:0007669"/>
    <property type="project" value="InterPro"/>
</dbReference>
<dbReference type="GO" id="GO:0006424">
    <property type="term" value="P:glutamyl-tRNA aminoacylation"/>
    <property type="evidence" value="ECO:0007669"/>
    <property type="project" value="UniProtKB-UniRule"/>
</dbReference>
<dbReference type="CDD" id="cd00807">
    <property type="entry name" value="GlnRS_core"/>
    <property type="match status" value="1"/>
</dbReference>
<dbReference type="FunFam" id="1.10.1160.10:FF:000001">
    <property type="entry name" value="Glutamine--tRNA ligase"/>
    <property type="match status" value="1"/>
</dbReference>
<dbReference type="FunFam" id="2.40.240.10:FF:000001">
    <property type="entry name" value="Glutamine--tRNA ligase"/>
    <property type="match status" value="1"/>
</dbReference>
<dbReference type="FunFam" id="3.90.800.10:FF:000001">
    <property type="entry name" value="Glutamine--tRNA ligase"/>
    <property type="match status" value="1"/>
</dbReference>
<dbReference type="FunFam" id="3.40.50.620:FF:000037">
    <property type="entry name" value="Glutamine--tRNA ligase cytoplasmic"/>
    <property type="match status" value="1"/>
</dbReference>
<dbReference type="Gene3D" id="1.10.1160.10">
    <property type="entry name" value="Glutamyl-trna Synthetase, Domain 2"/>
    <property type="match status" value="1"/>
</dbReference>
<dbReference type="Gene3D" id="3.90.800.10">
    <property type="entry name" value="Glutamyl-tRNA Synthetase, Domain 3"/>
    <property type="match status" value="1"/>
</dbReference>
<dbReference type="Gene3D" id="3.40.50.620">
    <property type="entry name" value="HUPs"/>
    <property type="match status" value="1"/>
</dbReference>
<dbReference type="Gene3D" id="2.40.240.10">
    <property type="entry name" value="Ribosomal Protein L25, Chain P"/>
    <property type="match status" value="2"/>
</dbReference>
<dbReference type="HAMAP" id="MF_00126">
    <property type="entry name" value="Gln_tRNA_synth"/>
    <property type="match status" value="1"/>
</dbReference>
<dbReference type="InterPro" id="IPR001412">
    <property type="entry name" value="aa-tRNA-synth_I_CS"/>
</dbReference>
<dbReference type="InterPro" id="IPR004514">
    <property type="entry name" value="Gln-tRNA-synth"/>
</dbReference>
<dbReference type="InterPro" id="IPR050132">
    <property type="entry name" value="Gln/Glu-tRNA_Ligase"/>
</dbReference>
<dbReference type="InterPro" id="IPR022861">
    <property type="entry name" value="Gln_tRNA_ligase_bac"/>
</dbReference>
<dbReference type="InterPro" id="IPR000924">
    <property type="entry name" value="Glu/Gln-tRNA-synth"/>
</dbReference>
<dbReference type="InterPro" id="IPR020058">
    <property type="entry name" value="Glu/Gln-tRNA-synth_Ib_cat-dom"/>
</dbReference>
<dbReference type="InterPro" id="IPR020059">
    <property type="entry name" value="Glu/Gln-tRNA-synth_Ib_codon-bd"/>
</dbReference>
<dbReference type="InterPro" id="IPR020061">
    <property type="entry name" value="Glu_tRNA_lig_a-bdl"/>
</dbReference>
<dbReference type="InterPro" id="IPR020056">
    <property type="entry name" value="Rbsml_bL25/Gln-tRNA_synth_N"/>
</dbReference>
<dbReference type="InterPro" id="IPR011035">
    <property type="entry name" value="Ribosomal_bL25/Gln-tRNA_synth"/>
</dbReference>
<dbReference type="InterPro" id="IPR014729">
    <property type="entry name" value="Rossmann-like_a/b/a_fold"/>
</dbReference>
<dbReference type="InterPro" id="IPR049437">
    <property type="entry name" value="tRNA-synt_1c_C2"/>
</dbReference>
<dbReference type="NCBIfam" id="TIGR00440">
    <property type="entry name" value="glnS"/>
    <property type="match status" value="1"/>
</dbReference>
<dbReference type="NCBIfam" id="NF011291">
    <property type="entry name" value="PRK14703.1"/>
    <property type="match status" value="1"/>
</dbReference>
<dbReference type="PANTHER" id="PTHR43097:SF5">
    <property type="entry name" value="GLUTAMATE--TRNA LIGASE"/>
    <property type="match status" value="1"/>
</dbReference>
<dbReference type="PANTHER" id="PTHR43097">
    <property type="entry name" value="GLUTAMINE-TRNA LIGASE"/>
    <property type="match status" value="1"/>
</dbReference>
<dbReference type="Pfam" id="PF00749">
    <property type="entry name" value="tRNA-synt_1c"/>
    <property type="match status" value="1"/>
</dbReference>
<dbReference type="Pfam" id="PF03950">
    <property type="entry name" value="tRNA-synt_1c_C"/>
    <property type="match status" value="1"/>
</dbReference>
<dbReference type="Pfam" id="PF20974">
    <property type="entry name" value="tRNA-synt_1c_C2"/>
    <property type="match status" value="1"/>
</dbReference>
<dbReference type="PRINTS" id="PR00987">
    <property type="entry name" value="TRNASYNTHGLU"/>
</dbReference>
<dbReference type="SUPFAM" id="SSF52374">
    <property type="entry name" value="Nucleotidylyl transferase"/>
    <property type="match status" value="1"/>
</dbReference>
<dbReference type="SUPFAM" id="SSF50715">
    <property type="entry name" value="Ribosomal protein L25-like"/>
    <property type="match status" value="1"/>
</dbReference>
<dbReference type="PROSITE" id="PS00178">
    <property type="entry name" value="AA_TRNA_LIGASE_I"/>
    <property type="match status" value="1"/>
</dbReference>
<keyword id="KW-0030">Aminoacyl-tRNA synthetase</keyword>
<keyword id="KW-0067">ATP-binding</keyword>
<keyword id="KW-0963">Cytoplasm</keyword>
<keyword id="KW-0436">Ligase</keyword>
<keyword id="KW-0547">Nucleotide-binding</keyword>
<keyword id="KW-0648">Protein biosynthesis</keyword>